<organism>
    <name type="scientific">Coxiella burnetii (strain CbuG_Q212)</name>
    <name type="common">Coxiella burnetii (strain Q212)</name>
    <dbReference type="NCBI Taxonomy" id="434923"/>
    <lineage>
        <taxon>Bacteria</taxon>
        <taxon>Pseudomonadati</taxon>
        <taxon>Pseudomonadota</taxon>
        <taxon>Gammaproteobacteria</taxon>
        <taxon>Legionellales</taxon>
        <taxon>Coxiellaceae</taxon>
        <taxon>Coxiella</taxon>
    </lineage>
</organism>
<sequence length="122" mass="13540">MIQTQSIVDVADNSGARRVMCIKVLGGSKRRYANIGDVIKVSIKEAIPRGKVKKGDVMHAVVVRTRKGVRRNDGSLIRFDNNAVVLLNNQLQLVGTRVFGPVVRELRTDKFMKIISLALEVL</sequence>
<proteinExistence type="inferred from homology"/>
<protein>
    <recommendedName>
        <fullName evidence="1">Large ribosomal subunit protein uL14</fullName>
    </recommendedName>
    <alternativeName>
        <fullName evidence="2">50S ribosomal protein L14</fullName>
    </alternativeName>
</protein>
<accession>B6J253</accession>
<comment type="function">
    <text evidence="1">Binds to 23S rRNA. Forms part of two intersubunit bridges in the 70S ribosome.</text>
</comment>
<comment type="subunit">
    <text evidence="1">Part of the 50S ribosomal subunit. Forms a cluster with proteins L3 and L19. In the 70S ribosome, L14 and L19 interact and together make contacts with the 16S rRNA in bridges B5 and B8.</text>
</comment>
<comment type="similarity">
    <text evidence="1">Belongs to the universal ribosomal protein uL14 family.</text>
</comment>
<evidence type="ECO:0000255" key="1">
    <source>
        <dbReference type="HAMAP-Rule" id="MF_01367"/>
    </source>
</evidence>
<evidence type="ECO:0000305" key="2"/>
<reference key="1">
    <citation type="journal article" date="2009" name="Infect. Immun.">
        <title>Comparative genomics reveal extensive transposon-mediated genomic plasticity and diversity among potential effector proteins within the genus Coxiella.</title>
        <authorList>
            <person name="Beare P.A."/>
            <person name="Unsworth N."/>
            <person name="Andoh M."/>
            <person name="Voth D.E."/>
            <person name="Omsland A."/>
            <person name="Gilk S.D."/>
            <person name="Williams K.P."/>
            <person name="Sobral B.W."/>
            <person name="Kupko J.J. III"/>
            <person name="Porcella S.F."/>
            <person name="Samuel J.E."/>
            <person name="Heinzen R.A."/>
        </authorList>
    </citation>
    <scope>NUCLEOTIDE SEQUENCE [LARGE SCALE GENOMIC DNA]</scope>
    <source>
        <strain>CbuG_Q212</strain>
    </source>
</reference>
<feature type="chain" id="PRO_1000144251" description="Large ribosomal subunit protein uL14">
    <location>
        <begin position="1"/>
        <end position="122"/>
    </location>
</feature>
<name>RL14_COXB2</name>
<dbReference type="EMBL" id="CP001019">
    <property type="protein sequence ID" value="ACJ19031.1"/>
    <property type="molecule type" value="Genomic_DNA"/>
</dbReference>
<dbReference type="RefSeq" id="WP_005771526.1">
    <property type="nucleotide sequence ID" value="NC_011527.1"/>
</dbReference>
<dbReference type="SMR" id="B6J253"/>
<dbReference type="KEGG" id="cbg:CbuG_1757"/>
<dbReference type="HOGENOM" id="CLU_095071_2_1_6"/>
<dbReference type="GO" id="GO:0022625">
    <property type="term" value="C:cytosolic large ribosomal subunit"/>
    <property type="evidence" value="ECO:0007669"/>
    <property type="project" value="TreeGrafter"/>
</dbReference>
<dbReference type="GO" id="GO:0070180">
    <property type="term" value="F:large ribosomal subunit rRNA binding"/>
    <property type="evidence" value="ECO:0007669"/>
    <property type="project" value="TreeGrafter"/>
</dbReference>
<dbReference type="GO" id="GO:0003735">
    <property type="term" value="F:structural constituent of ribosome"/>
    <property type="evidence" value="ECO:0007669"/>
    <property type="project" value="InterPro"/>
</dbReference>
<dbReference type="GO" id="GO:0006412">
    <property type="term" value="P:translation"/>
    <property type="evidence" value="ECO:0007669"/>
    <property type="project" value="UniProtKB-UniRule"/>
</dbReference>
<dbReference type="CDD" id="cd00337">
    <property type="entry name" value="Ribosomal_uL14"/>
    <property type="match status" value="1"/>
</dbReference>
<dbReference type="FunFam" id="2.40.150.20:FF:000001">
    <property type="entry name" value="50S ribosomal protein L14"/>
    <property type="match status" value="1"/>
</dbReference>
<dbReference type="Gene3D" id="2.40.150.20">
    <property type="entry name" value="Ribosomal protein L14"/>
    <property type="match status" value="1"/>
</dbReference>
<dbReference type="HAMAP" id="MF_01367">
    <property type="entry name" value="Ribosomal_uL14"/>
    <property type="match status" value="1"/>
</dbReference>
<dbReference type="InterPro" id="IPR000218">
    <property type="entry name" value="Ribosomal_uL14"/>
</dbReference>
<dbReference type="InterPro" id="IPR005745">
    <property type="entry name" value="Ribosomal_uL14_bac-type"/>
</dbReference>
<dbReference type="InterPro" id="IPR019972">
    <property type="entry name" value="Ribosomal_uL14_CS"/>
</dbReference>
<dbReference type="InterPro" id="IPR036853">
    <property type="entry name" value="Ribosomal_uL14_sf"/>
</dbReference>
<dbReference type="NCBIfam" id="TIGR01067">
    <property type="entry name" value="rplN_bact"/>
    <property type="match status" value="1"/>
</dbReference>
<dbReference type="PANTHER" id="PTHR11761">
    <property type="entry name" value="50S/60S RIBOSOMAL PROTEIN L14/L23"/>
    <property type="match status" value="1"/>
</dbReference>
<dbReference type="PANTHER" id="PTHR11761:SF3">
    <property type="entry name" value="LARGE RIBOSOMAL SUBUNIT PROTEIN UL14M"/>
    <property type="match status" value="1"/>
</dbReference>
<dbReference type="Pfam" id="PF00238">
    <property type="entry name" value="Ribosomal_L14"/>
    <property type="match status" value="1"/>
</dbReference>
<dbReference type="SMART" id="SM01374">
    <property type="entry name" value="Ribosomal_L14"/>
    <property type="match status" value="1"/>
</dbReference>
<dbReference type="SUPFAM" id="SSF50193">
    <property type="entry name" value="Ribosomal protein L14"/>
    <property type="match status" value="1"/>
</dbReference>
<dbReference type="PROSITE" id="PS00049">
    <property type="entry name" value="RIBOSOMAL_L14"/>
    <property type="match status" value="1"/>
</dbReference>
<gene>
    <name evidence="1" type="primary">rplN</name>
    <name type="ordered locus">CbuG_1757</name>
</gene>
<keyword id="KW-0687">Ribonucleoprotein</keyword>
<keyword id="KW-0689">Ribosomal protein</keyword>
<keyword id="KW-0694">RNA-binding</keyword>
<keyword id="KW-0699">rRNA-binding</keyword>